<protein>
    <recommendedName>
        <fullName evidence="17">Acetylcholine receptor subunit alpha</fullName>
    </recommendedName>
</protein>
<organism>
    <name type="scientific">Homo sapiens</name>
    <name type="common">Human</name>
    <dbReference type="NCBI Taxonomy" id="9606"/>
    <lineage>
        <taxon>Eukaryota</taxon>
        <taxon>Metazoa</taxon>
        <taxon>Chordata</taxon>
        <taxon>Craniata</taxon>
        <taxon>Vertebrata</taxon>
        <taxon>Euteleostomi</taxon>
        <taxon>Mammalia</taxon>
        <taxon>Eutheria</taxon>
        <taxon>Euarchontoglires</taxon>
        <taxon>Primates</taxon>
        <taxon>Haplorrhini</taxon>
        <taxon>Catarrhini</taxon>
        <taxon>Hominidae</taxon>
        <taxon>Homo</taxon>
    </lineage>
</organism>
<comment type="function">
    <molecule>Isoform 1</molecule>
    <text evidence="10">Upon acetylcholine binding, the AChR responds by an extensive change in conformation that affects all subunits and leads to opening of an ion-conducting channel across the plasma membrane.</text>
</comment>
<comment type="function">
    <molecule>Isoform 2</molecule>
    <text evidence="12">Non functional acetylcholine receptor alpha subunit which is not integrated into functional acetylcholine-gated cation-selective channels.</text>
</comment>
<comment type="catalytic activity">
    <reaction evidence="1">
        <text>K(+)(in) = K(+)(out)</text>
        <dbReference type="Rhea" id="RHEA:29463"/>
        <dbReference type="ChEBI" id="CHEBI:29103"/>
    </reaction>
</comment>
<comment type="catalytic activity">
    <reaction evidence="1">
        <text>Na(+)(in) = Na(+)(out)</text>
        <dbReference type="Rhea" id="RHEA:34963"/>
        <dbReference type="ChEBI" id="CHEBI:29101"/>
    </reaction>
</comment>
<comment type="subunit">
    <molecule>Isoform 1</molecule>
    <text evidence="6">One of the alpha chains that assemble within the acetylcholine receptor, a pentamer of two alpha chains, a beta, a delta, and a gamma (in immature muscle) or epsilon (in mature muscle) chains. The muscle heteropentamer composed of alpha-1, beta-1, delta, epsilon subunits interacts with the alpha-conotoxin ImII (PubMed:15609996).</text>
</comment>
<comment type="subunit">
    <molecule>Isoform 2</molecule>
    <text evidence="12">Is able to interact with other subunits of the acetylcholine receptor but is not assembled into functional acetylcholine-gated cation-selective channels.</text>
</comment>
<comment type="subcellular location">
    <subcellularLocation>
        <location evidence="18">Postsynaptic cell membrane</location>
        <topology evidence="2">Multi-pass membrane protein</topology>
    </subcellularLocation>
    <subcellularLocation>
        <location evidence="10">Cell membrane</location>
        <topology evidence="2">Multi-pass membrane protein</topology>
    </subcellularLocation>
</comment>
<comment type="alternative products">
    <event type="alternative splicing"/>
    <isoform>
        <id>P02708-2</id>
        <name>1</name>
        <sequence type="displayed"/>
    </isoform>
    <isoform>
        <id>P02708-1</id>
        <name>2</name>
        <name>P3A(+)</name>
        <name evidence="16">alpha+</name>
        <sequence type="described" ref="VSP_061499"/>
    </isoform>
</comment>
<comment type="tissue specificity">
    <text>Isoform 1 is only expressed in skeletal muscle. Isoform 2 is constitutively expressed in skeletal muscle, brain, heart, kidney, liver, lung and thymus.</text>
</comment>
<comment type="disease" evidence="8">
    <disease id="DI-01895">
        <name>Multiple pterygium syndrome, lethal type</name>
        <acronym>LMPS</acronym>
        <description>Multiple pterygia are found infrequently in children with arthrogryposis and in fetuses with fetal akinesia syndrome. In lethal multiple pterygium syndrome there is intrauterine growth retardation, multiple pterygia, and flexion contractures causing severe arthrogryposis and fetal akinesia. Subcutaneous edema can be severe, causing fetal hydrops with cystic hygroma and lung hypoplasia. Oligohydramnios and facial anomalies are frequent.</description>
        <dbReference type="MIM" id="253290"/>
    </disease>
    <text>The disease is caused by variants affecting the gene represented in this entry.</text>
</comment>
<comment type="disease">
    <text>The alpha subunit is the main focus for antibody binding in myasthenia gravis. Myasthenia gravis is characterized by sporadic muscular fatigability and weakness, occurring chiefly in muscles innervated by cranial nerves, and characteristically improved by cholinesterase-inhibiting drugs.</text>
</comment>
<comment type="disease" evidence="7 11 13 14 15">
    <disease id="DI-00368">
        <name>Myasthenic syndrome, congenital, 1A, slow-channel</name>
        <acronym>CMS1A</acronym>
        <description>A common congenital myasthenic syndrome. Congenital myasthenic syndromes are characterized by muscle weakness affecting the axial and limb muscles (with hypotonia in early-onset forms), the ocular muscles (leading to ptosis and ophthalmoplegia), and the facial and bulbar musculature (affecting sucking and swallowing, and leading to dysphonia). The symptoms fluctuate and worsen with physical effort. CMS1A is a slow-channel myasthenic syndrome. It is caused by kinetic abnormalities of the AChR, resulting in prolonged AChR channel opening episodes, prolonged endplate currents, and depolarization block. This is associated with calcium overload, which may contribute to subsequent degeneration of the endplate and postsynaptic membrane.</description>
        <dbReference type="MIM" id="601462"/>
    </disease>
    <text>The disease is caused by variants affecting the gene represented in this entry.</text>
</comment>
<comment type="disease" evidence="3 4 5">
    <disease id="DI-00367">
        <name>Myasthenic syndrome, congenital, 1B, fast-channel</name>
        <acronym>CMS1B</acronym>
        <description>A form of congenital myasthenic syndrome, a group of disorders characterized by failure of neuromuscular transmission, including pre-synaptic, synaptic, and post-synaptic disorders that are not of autoimmune origin. Clinical features are easy fatigability and muscle weakness affecting the axial and limb muscles (with hypotonia in early-onset forms), the ocular muscles (leading to ptosis and ophthalmoplegia), and the facial and bulbar musculature (affecting sucking and swallowing, and leading to dysphonia). The symptoms fluctuate and worsen with physical effort. CMS1B is a fast-channel myasthenic syndrome. It is caused by kinetic abnormalities of the AChR, resulting in brief opening and activity of the channel, with a rapid decay in endplate current, failure to achieve threshold depolarization of the endplate and consequent failure to fire an action potential.</description>
        <dbReference type="MIM" id="608930"/>
    </disease>
    <text>The disease is caused by variants affecting the gene represented in this entry.</text>
</comment>
<comment type="miscellaneous">
    <molecule>Isoform 2</molecule>
    <text evidence="12">Acetylcholine receptors incorporating that alpha subunit do not bind alpha-bungarotoxin.</text>
</comment>
<comment type="similarity">
    <text evidence="17">Belongs to the ligand-gated ion channel (TC 1.A.9) family. Acetylcholine receptor (TC 1.A.9.1) subfamily. Alpha-1/CHRNA1 sub-subfamily.</text>
</comment>
<comment type="sequence caution" evidence="17">
    <conflict type="frameshift">
        <sequence resource="EMBL-CDS" id="CAA49705"/>
    </conflict>
</comment>
<keyword id="KW-0002">3D-structure</keyword>
<keyword id="KW-0025">Alternative splicing</keyword>
<keyword id="KW-1003">Cell membrane</keyword>
<keyword id="KW-1004">Congenital myasthenic syndrome</keyword>
<keyword id="KW-0903">Direct protein sequencing</keyword>
<keyword id="KW-0225">Disease variant</keyword>
<keyword id="KW-1015">Disulfide bond</keyword>
<keyword id="KW-0325">Glycoprotein</keyword>
<keyword id="KW-0407">Ion channel</keyword>
<keyword id="KW-0406">Ion transport</keyword>
<keyword id="KW-1071">Ligand-gated ion channel</keyword>
<keyword id="KW-0472">Membrane</keyword>
<keyword id="KW-0628">Postsynaptic cell membrane</keyword>
<keyword id="KW-1267">Proteomics identification</keyword>
<keyword id="KW-0675">Receptor</keyword>
<keyword id="KW-1185">Reference proteome</keyword>
<keyword id="KW-0732">Signal</keyword>
<keyword id="KW-0770">Synapse</keyword>
<keyword id="KW-0812">Transmembrane</keyword>
<keyword id="KW-1133">Transmembrane helix</keyword>
<keyword id="KW-0813">Transport</keyword>
<name>ACHA_HUMAN</name>
<dbReference type="EMBL" id="X02502">
    <property type="protein sequence ID" value="CAA26344.1"/>
    <property type="molecule type" value="Genomic_DNA"/>
</dbReference>
<dbReference type="EMBL" id="X02503">
    <property type="protein sequence ID" value="CAA26344.1"/>
    <property type="status" value="JOINED"/>
    <property type="molecule type" value="Genomic_DNA"/>
</dbReference>
<dbReference type="EMBL" id="X02504">
    <property type="protein sequence ID" value="CAA26344.1"/>
    <property type="status" value="JOINED"/>
    <property type="molecule type" value="Genomic_DNA"/>
</dbReference>
<dbReference type="EMBL" id="X02505">
    <property type="protein sequence ID" value="CAA26344.1"/>
    <property type="status" value="JOINED"/>
    <property type="molecule type" value="Genomic_DNA"/>
</dbReference>
<dbReference type="EMBL" id="X02506">
    <property type="protein sequence ID" value="CAA26344.1"/>
    <property type="status" value="JOINED"/>
    <property type="molecule type" value="Genomic_DNA"/>
</dbReference>
<dbReference type="EMBL" id="X02507">
    <property type="protein sequence ID" value="CAA26344.1"/>
    <property type="status" value="JOINED"/>
    <property type="molecule type" value="Genomic_DNA"/>
</dbReference>
<dbReference type="EMBL" id="X02508">
    <property type="protein sequence ID" value="CAA26344.1"/>
    <property type="status" value="JOINED"/>
    <property type="molecule type" value="Genomic_DNA"/>
</dbReference>
<dbReference type="EMBL" id="Y00762">
    <property type="protein sequence ID" value="CAA68731.1"/>
    <property type="molecule type" value="mRNA"/>
</dbReference>
<dbReference type="EMBL" id="X17104">
    <property type="protein sequence ID" value="CAA34960.1"/>
    <property type="molecule type" value="Genomic_DNA"/>
</dbReference>
<dbReference type="EMBL" id="AK299445">
    <property type="protein sequence ID" value="BAG61418.1"/>
    <property type="molecule type" value="mRNA"/>
</dbReference>
<dbReference type="EMBL" id="CH471058">
    <property type="protein sequence ID" value="EAX11125.1"/>
    <property type="molecule type" value="Genomic_DNA"/>
</dbReference>
<dbReference type="EMBL" id="CH471058">
    <property type="protein sequence ID" value="EAX11127.1"/>
    <property type="molecule type" value="Genomic_DNA"/>
</dbReference>
<dbReference type="EMBL" id="S77094">
    <property type="protein sequence ID" value="AAD14247.1"/>
    <property type="molecule type" value="mRNA"/>
</dbReference>
<dbReference type="EMBL" id="X70108">
    <property type="protein sequence ID" value="CAA49705.1"/>
    <property type="status" value="ALT_FRAME"/>
    <property type="molecule type" value="Genomic_DNA"/>
</dbReference>
<dbReference type="CCDS" id="CCDS2261.1">
    <molecule id="P02708-2"/>
</dbReference>
<dbReference type="CCDS" id="CCDS33331.1">
    <molecule id="P02708-1"/>
</dbReference>
<dbReference type="PIR" id="A03168">
    <property type="entry name" value="ACHUA1"/>
</dbReference>
<dbReference type="PIR" id="S10148">
    <property type="entry name" value="S10148"/>
</dbReference>
<dbReference type="RefSeq" id="NP_000070.1">
    <molecule id="P02708-2"/>
    <property type="nucleotide sequence ID" value="NM_000079.4"/>
</dbReference>
<dbReference type="RefSeq" id="NP_001034612.1">
    <molecule id="P02708-1"/>
    <property type="nucleotide sequence ID" value="NM_001039523.3"/>
</dbReference>
<dbReference type="PDB" id="4ZJS">
    <property type="method" value="X-ray"/>
    <property type="resolution" value="2.23 A"/>
    <property type="chains" value="A/B/C/D/E=21-50, A/B/C/D/E=81-101"/>
</dbReference>
<dbReference type="PDB" id="5HBT">
    <property type="method" value="X-ray"/>
    <property type="resolution" value="2.61 A"/>
    <property type="chains" value="B=21-231"/>
</dbReference>
<dbReference type="PDBsum" id="4ZJS"/>
<dbReference type="PDBsum" id="5HBT"/>
<dbReference type="SMR" id="P02708"/>
<dbReference type="BioGRID" id="107556">
    <property type="interactions" value="46"/>
</dbReference>
<dbReference type="ComplexPortal" id="CPX-2179">
    <property type="entry name" value="Muscle-type nicotinic acetylcholine receptor complex, alpha1-beta1-delta-gamma"/>
</dbReference>
<dbReference type="ComplexPortal" id="CPX-255">
    <property type="entry name" value="Muscle-type nicotinic acetylcholine receptor complex, alpha1-beta1-delta-epsilon"/>
</dbReference>
<dbReference type="CORUM" id="P02708"/>
<dbReference type="FunCoup" id="P02708">
    <property type="interactions" value="420"/>
</dbReference>
<dbReference type="IntAct" id="P02708">
    <property type="interactions" value="38"/>
</dbReference>
<dbReference type="STRING" id="9606.ENSP00000261007"/>
<dbReference type="BindingDB" id="P02708"/>
<dbReference type="ChEMBL" id="CHEMBL4808"/>
<dbReference type="DrugBank" id="DB08838">
    <property type="generic name" value="Agmatine"/>
</dbReference>
<dbReference type="DrugBank" id="DB00565">
    <property type="generic name" value="Cisatracurium"/>
</dbReference>
<dbReference type="DrugBank" id="DB01245">
    <property type="generic name" value="Decamethonium"/>
</dbReference>
<dbReference type="DrugBank" id="DB00555">
    <property type="generic name" value="Lamotrigine"/>
</dbReference>
<dbReference type="DrugCentral" id="P02708"/>
<dbReference type="GuidetoPHARMACOLOGY" id="462"/>
<dbReference type="TCDB" id="1.A.9.1.1">
    <property type="family name" value="the neurotransmitter receptor, cys loop, ligand-gated ion channel (lic) family"/>
</dbReference>
<dbReference type="GlyCosmos" id="P02708">
    <property type="glycosylation" value="1 site, No reported glycans"/>
</dbReference>
<dbReference type="GlyGen" id="P02708">
    <property type="glycosylation" value="1 site"/>
</dbReference>
<dbReference type="iPTMnet" id="P02708"/>
<dbReference type="PhosphoSitePlus" id="P02708"/>
<dbReference type="BioMuta" id="CHRNA1"/>
<dbReference type="DMDM" id="113071"/>
<dbReference type="jPOST" id="P02708"/>
<dbReference type="MassIVE" id="P02708"/>
<dbReference type="PaxDb" id="9606-ENSP00000261007"/>
<dbReference type="PeptideAtlas" id="P02708"/>
<dbReference type="ABCD" id="P02708">
    <property type="antibodies" value="39 sequenced antibodies"/>
</dbReference>
<dbReference type="Antibodypedia" id="19487">
    <property type="antibodies" value="443 antibodies from 37 providers"/>
</dbReference>
<dbReference type="DNASU" id="1134"/>
<dbReference type="Ensembl" id="ENST00000261007.9">
    <molecule id="P02708-1"/>
    <property type="protein sequence ID" value="ENSP00000261007.5"/>
    <property type="gene ID" value="ENSG00000138435.16"/>
</dbReference>
<dbReference type="Ensembl" id="ENST00000348749.9">
    <molecule id="P02708-2"/>
    <property type="protein sequence ID" value="ENSP00000261008.5"/>
    <property type="gene ID" value="ENSG00000138435.16"/>
</dbReference>
<dbReference type="GeneID" id="1134"/>
<dbReference type="KEGG" id="hsa:1134"/>
<dbReference type="MANE-Select" id="ENST00000348749.9">
    <property type="protein sequence ID" value="ENSP00000261008.5"/>
    <property type="RefSeq nucleotide sequence ID" value="NM_000079.4"/>
    <property type="RefSeq protein sequence ID" value="NP_000070.1"/>
</dbReference>
<dbReference type="UCSC" id="uc002ujd.3">
    <molecule id="P02708-2"/>
    <property type="organism name" value="human"/>
</dbReference>
<dbReference type="AGR" id="HGNC:1955"/>
<dbReference type="CTD" id="1134"/>
<dbReference type="DisGeNET" id="1134"/>
<dbReference type="GeneCards" id="CHRNA1"/>
<dbReference type="GeneReviews" id="CHRNA1"/>
<dbReference type="HGNC" id="HGNC:1955">
    <property type="gene designation" value="CHRNA1"/>
</dbReference>
<dbReference type="HPA" id="ENSG00000138435">
    <property type="expression patterns" value="Tissue enriched (skeletal)"/>
</dbReference>
<dbReference type="MalaCards" id="CHRNA1"/>
<dbReference type="MIM" id="100690">
    <property type="type" value="gene"/>
</dbReference>
<dbReference type="MIM" id="253290">
    <property type="type" value="phenotype"/>
</dbReference>
<dbReference type="MIM" id="254200">
    <property type="type" value="phenotype"/>
</dbReference>
<dbReference type="MIM" id="601462">
    <property type="type" value="phenotype"/>
</dbReference>
<dbReference type="MIM" id="608930">
    <property type="type" value="phenotype"/>
</dbReference>
<dbReference type="neXtProt" id="NX_P02708"/>
<dbReference type="OpenTargets" id="ENSG00000138435"/>
<dbReference type="Orphanet" id="33108">
    <property type="disease" value="Lethal multiple pterygium syndrome"/>
</dbReference>
<dbReference type="Orphanet" id="98913">
    <property type="disease" value="Postsynaptic congenital myasthenic syndromes"/>
</dbReference>
<dbReference type="PharmGKB" id="PA26487"/>
<dbReference type="VEuPathDB" id="HostDB:ENSG00000138435"/>
<dbReference type="eggNOG" id="KOG3645">
    <property type="taxonomic scope" value="Eukaryota"/>
</dbReference>
<dbReference type="GeneTree" id="ENSGT00940000156851"/>
<dbReference type="HOGENOM" id="CLU_018074_1_0_1"/>
<dbReference type="InParanoid" id="P02708"/>
<dbReference type="OMA" id="GHITWNP"/>
<dbReference type="OrthoDB" id="5975154at2759"/>
<dbReference type="PAN-GO" id="P02708">
    <property type="GO annotations" value="9 GO annotations based on evolutionary models"/>
</dbReference>
<dbReference type="PhylomeDB" id="P02708"/>
<dbReference type="TreeFam" id="TF315605"/>
<dbReference type="PathwayCommons" id="P02708"/>
<dbReference type="Reactome" id="R-HSA-629594">
    <property type="pathway name" value="Highly calcium permeable postsynaptic nicotinic acetylcholine receptors"/>
</dbReference>
<dbReference type="Reactome" id="R-HSA-629597">
    <property type="pathway name" value="Highly calcium permeable nicotinic acetylcholine receptors"/>
</dbReference>
<dbReference type="SignaLink" id="P02708"/>
<dbReference type="SIGNOR" id="P02708"/>
<dbReference type="BioGRID-ORCS" id="1134">
    <property type="hits" value="8 hits in 1153 CRISPR screens"/>
</dbReference>
<dbReference type="CD-CODE" id="3EAB04FE">
    <property type="entry name" value="Rapsn condensate"/>
</dbReference>
<dbReference type="GeneWiki" id="Cholinergic_receptor,_nicotinic,_alpha_1"/>
<dbReference type="GenomeRNAi" id="1134"/>
<dbReference type="Pharos" id="P02708">
    <property type="development level" value="Tclin"/>
</dbReference>
<dbReference type="PRO" id="PR:P02708"/>
<dbReference type="Proteomes" id="UP000005640">
    <property type="component" value="Chromosome 2"/>
</dbReference>
<dbReference type="RNAct" id="P02708">
    <property type="molecule type" value="protein"/>
</dbReference>
<dbReference type="Bgee" id="ENSG00000138435">
    <property type="expression patterns" value="Expressed in gastrocnemius and 103 other cell types or tissues"/>
</dbReference>
<dbReference type="ExpressionAtlas" id="P02708">
    <property type="expression patterns" value="baseline and differential"/>
</dbReference>
<dbReference type="GO" id="GO:0005892">
    <property type="term" value="C:acetylcholine-gated channel complex"/>
    <property type="evidence" value="ECO:0000250"/>
    <property type="project" value="BHF-UCL"/>
</dbReference>
<dbReference type="GO" id="GO:0009986">
    <property type="term" value="C:cell surface"/>
    <property type="evidence" value="ECO:0000314"/>
    <property type="project" value="BHF-UCL"/>
</dbReference>
<dbReference type="GO" id="GO:0031594">
    <property type="term" value="C:neuromuscular junction"/>
    <property type="evidence" value="ECO:0000314"/>
    <property type="project" value="MGI"/>
</dbReference>
<dbReference type="GO" id="GO:0043005">
    <property type="term" value="C:neuron projection"/>
    <property type="evidence" value="ECO:0000318"/>
    <property type="project" value="GO_Central"/>
</dbReference>
<dbReference type="GO" id="GO:0005886">
    <property type="term" value="C:plasma membrane"/>
    <property type="evidence" value="ECO:0000314"/>
    <property type="project" value="HPA"/>
</dbReference>
<dbReference type="GO" id="GO:0045211">
    <property type="term" value="C:postsynaptic membrane"/>
    <property type="evidence" value="ECO:0000303"/>
    <property type="project" value="BHF-UCL"/>
</dbReference>
<dbReference type="GO" id="GO:0099634">
    <property type="term" value="C:postsynaptic specialization membrane"/>
    <property type="evidence" value="ECO:0007669"/>
    <property type="project" value="Ensembl"/>
</dbReference>
<dbReference type="GO" id="GO:0045202">
    <property type="term" value="C:synapse"/>
    <property type="evidence" value="ECO:0000318"/>
    <property type="project" value="GO_Central"/>
</dbReference>
<dbReference type="GO" id="GO:0042166">
    <property type="term" value="F:acetylcholine binding"/>
    <property type="evidence" value="ECO:0007669"/>
    <property type="project" value="Ensembl"/>
</dbReference>
<dbReference type="GO" id="GO:0015464">
    <property type="term" value="F:acetylcholine receptor activity"/>
    <property type="evidence" value="ECO:0000304"/>
    <property type="project" value="ProtInc"/>
</dbReference>
<dbReference type="GO" id="GO:0022848">
    <property type="term" value="F:acetylcholine-gated monoatomic cation-selective channel activity"/>
    <property type="evidence" value="ECO:0000315"/>
    <property type="project" value="MGI"/>
</dbReference>
<dbReference type="GO" id="GO:1904315">
    <property type="term" value="F:transmitter-gated monoatomic ion channel activity involved in regulation of postsynaptic membrane potential"/>
    <property type="evidence" value="ECO:0000314"/>
    <property type="project" value="SynGO"/>
</dbReference>
<dbReference type="GO" id="GO:0095500">
    <property type="term" value="P:acetylcholine receptor signaling pathway"/>
    <property type="evidence" value="ECO:0000318"/>
    <property type="project" value="GO_Central"/>
</dbReference>
<dbReference type="GO" id="GO:0051899">
    <property type="term" value="P:membrane depolarization"/>
    <property type="evidence" value="ECO:0000318"/>
    <property type="project" value="GO_Central"/>
</dbReference>
<dbReference type="GO" id="GO:0034220">
    <property type="term" value="P:monoatomic ion transmembrane transport"/>
    <property type="evidence" value="ECO:0000318"/>
    <property type="project" value="GO_Central"/>
</dbReference>
<dbReference type="GO" id="GO:0046716">
    <property type="term" value="P:muscle cell cellular homeostasis"/>
    <property type="evidence" value="ECO:0000315"/>
    <property type="project" value="BHF-UCL"/>
</dbReference>
<dbReference type="GO" id="GO:0050881">
    <property type="term" value="P:musculoskeletal movement"/>
    <property type="evidence" value="ECO:0000315"/>
    <property type="project" value="BHF-UCL"/>
</dbReference>
<dbReference type="GO" id="GO:0007528">
    <property type="term" value="P:neuromuscular junction development"/>
    <property type="evidence" value="ECO:0000315"/>
    <property type="project" value="MGI"/>
</dbReference>
<dbReference type="GO" id="GO:0050905">
    <property type="term" value="P:neuromuscular process"/>
    <property type="evidence" value="ECO:0000315"/>
    <property type="project" value="BHF-UCL"/>
</dbReference>
<dbReference type="GO" id="GO:0007274">
    <property type="term" value="P:neuromuscular synaptic transmission"/>
    <property type="evidence" value="ECO:0000315"/>
    <property type="project" value="MGI"/>
</dbReference>
<dbReference type="GO" id="GO:0070050">
    <property type="term" value="P:neuron cellular homeostasis"/>
    <property type="evidence" value="ECO:0000315"/>
    <property type="project" value="BHF-UCL"/>
</dbReference>
<dbReference type="GO" id="GO:0019228">
    <property type="term" value="P:neuronal action potential"/>
    <property type="evidence" value="ECO:0000315"/>
    <property type="project" value="BHF-UCL"/>
</dbReference>
<dbReference type="GO" id="GO:0042391">
    <property type="term" value="P:regulation of membrane potential"/>
    <property type="evidence" value="ECO:0000315"/>
    <property type="project" value="BHF-UCL"/>
</dbReference>
<dbReference type="GO" id="GO:0035094">
    <property type="term" value="P:response to nicotine"/>
    <property type="evidence" value="ECO:0000318"/>
    <property type="project" value="GO_Central"/>
</dbReference>
<dbReference type="GO" id="GO:0003009">
    <property type="term" value="P:skeletal muscle contraction"/>
    <property type="evidence" value="ECO:0000315"/>
    <property type="project" value="BHF-UCL"/>
</dbReference>
<dbReference type="GO" id="GO:0048630">
    <property type="term" value="P:skeletal muscle tissue growth"/>
    <property type="evidence" value="ECO:0000315"/>
    <property type="project" value="BHF-UCL"/>
</dbReference>
<dbReference type="GO" id="GO:0007271">
    <property type="term" value="P:synaptic transmission, cholinergic"/>
    <property type="evidence" value="ECO:0000318"/>
    <property type="project" value="GO_Central"/>
</dbReference>
<dbReference type="CDD" id="cd19014">
    <property type="entry name" value="LGIC_ECD_nAChR_A1"/>
    <property type="match status" value="1"/>
</dbReference>
<dbReference type="CDD" id="cd19064">
    <property type="entry name" value="LGIC_TM_nAChR"/>
    <property type="match status" value="1"/>
</dbReference>
<dbReference type="FunFam" id="1.20.58.390:FF:000013">
    <property type="entry name" value="Putative acetylcholine receptor subunit alpha"/>
    <property type="match status" value="1"/>
</dbReference>
<dbReference type="FunFam" id="1.20.58.390:FF:000016">
    <property type="entry name" value="Putative acetylcholine receptor subunit alpha"/>
    <property type="match status" value="1"/>
</dbReference>
<dbReference type="FunFam" id="2.70.170.10:FF:000019">
    <property type="entry name" value="Putative acetylcholine receptor subunit alpha"/>
    <property type="match status" value="1"/>
</dbReference>
<dbReference type="Gene3D" id="2.70.170.10">
    <property type="entry name" value="Neurotransmitter-gated ion-channel ligand-binding domain"/>
    <property type="match status" value="1"/>
</dbReference>
<dbReference type="Gene3D" id="1.20.58.390">
    <property type="entry name" value="Neurotransmitter-gated ion-channel transmembrane domain"/>
    <property type="match status" value="2"/>
</dbReference>
<dbReference type="InterPro" id="IPR006202">
    <property type="entry name" value="Neur_chan_lig-bd"/>
</dbReference>
<dbReference type="InterPro" id="IPR036734">
    <property type="entry name" value="Neur_chan_lig-bd_sf"/>
</dbReference>
<dbReference type="InterPro" id="IPR006201">
    <property type="entry name" value="Neur_channel"/>
</dbReference>
<dbReference type="InterPro" id="IPR036719">
    <property type="entry name" value="Neuro-gated_channel_TM_sf"/>
</dbReference>
<dbReference type="InterPro" id="IPR038050">
    <property type="entry name" value="Neuro_actylchol_rec"/>
</dbReference>
<dbReference type="InterPro" id="IPR006029">
    <property type="entry name" value="Neurotrans-gated_channel_TM"/>
</dbReference>
<dbReference type="InterPro" id="IPR018000">
    <property type="entry name" value="Neurotransmitter_ion_chnl_CS"/>
</dbReference>
<dbReference type="InterPro" id="IPR002394">
    <property type="entry name" value="Nicotinic_acetylcholine_rcpt"/>
</dbReference>
<dbReference type="NCBIfam" id="TIGR00860">
    <property type="entry name" value="LIC"/>
    <property type="match status" value="1"/>
</dbReference>
<dbReference type="PANTHER" id="PTHR18945">
    <property type="entry name" value="NEUROTRANSMITTER GATED ION CHANNEL"/>
    <property type="match status" value="1"/>
</dbReference>
<dbReference type="Pfam" id="PF02931">
    <property type="entry name" value="Neur_chan_LBD"/>
    <property type="match status" value="1"/>
</dbReference>
<dbReference type="Pfam" id="PF02932">
    <property type="entry name" value="Neur_chan_memb"/>
    <property type="match status" value="1"/>
</dbReference>
<dbReference type="PRINTS" id="PR00254">
    <property type="entry name" value="NICOTINICR"/>
</dbReference>
<dbReference type="PRINTS" id="PR00252">
    <property type="entry name" value="NRIONCHANNEL"/>
</dbReference>
<dbReference type="SUPFAM" id="SSF90112">
    <property type="entry name" value="Neurotransmitter-gated ion-channel transmembrane pore"/>
    <property type="match status" value="1"/>
</dbReference>
<dbReference type="SUPFAM" id="SSF63712">
    <property type="entry name" value="Nicotinic receptor ligand binding domain-like"/>
    <property type="match status" value="1"/>
</dbReference>
<dbReference type="PROSITE" id="PS00236">
    <property type="entry name" value="NEUROTR_ION_CHANNEL"/>
    <property type="match status" value="1"/>
</dbReference>
<proteinExistence type="evidence at protein level"/>
<reference key="1">
    <citation type="journal article" date="1983" name="Nature">
        <title>Cloning and sequence analysis of calf cDNA and human genomic DNA encoding alpha-subunit precursor of muscle acetylcholine receptor.</title>
        <authorList>
            <person name="Noda M."/>
            <person name="Furutani Y."/>
            <person name="Takahashi H."/>
            <person name="Toyosato M."/>
            <person name="Tanabe T."/>
            <person name="Shimizu S."/>
            <person name="Kikyotani S."/>
            <person name="Kayano T."/>
            <person name="Hirose T."/>
            <person name="Inayama S."/>
            <person name="Numa S."/>
        </authorList>
    </citation>
    <scope>NUCLEOTIDE SEQUENCE [GENOMIC DNA]</scope>
</reference>
<reference key="2">
    <citation type="journal article" date="1988" name="FEBS Lett.">
        <title>The human medulloblastoma cell line TE671 expresses a muscle-like acetylcholine receptor. Cloning of the alpha-subunit cDNA.</title>
        <authorList>
            <person name="Schoepfer R."/>
            <person name="Luther M."/>
            <person name="Lindstrom J.M."/>
        </authorList>
    </citation>
    <scope>NUCLEOTIDE SEQUENCE [MRNA] (ISOFORM 1)</scope>
</reference>
<reference key="3">
    <citation type="journal article" date="1990" name="EMBO J.">
        <title>The human muscle nicotinic acetylcholine receptor alpha-subunit exist as two isoforms: a novel exon.</title>
        <authorList>
            <person name="Beeson D."/>
            <person name="Morris A."/>
            <person name="Vincent A."/>
            <person name="Newsom-Davis J."/>
        </authorList>
    </citation>
    <scope>NUCLEOTIDE SEQUENCE [GENOMIC DNA]</scope>
    <scope>ALTERNATIVE SPLICING (ISOFORM 2)</scope>
    <source>
        <tissue>Muscle</tissue>
    </source>
</reference>
<reference key="4">
    <citation type="journal article" date="1994" name="Thymus">
        <title>Cloning of a cDNA coding for the acetylcholine receptor alpha-subunit from a thymoma associated with myasthenia gravis.</title>
        <authorList>
            <person name="Gattenloehner S."/>
            <person name="Brabletz T."/>
            <person name="Schultz A."/>
            <person name="Marx A."/>
            <person name="Mueller-Hermelink H.-K."/>
            <person name="Kirchner T."/>
        </authorList>
    </citation>
    <scope>NUCLEOTIDE SEQUENCE [MRNA] (ISOFORM 1)</scope>
    <source>
        <tissue>Thymus</tissue>
    </source>
</reference>
<reference key="5">
    <citation type="journal article" date="2004" name="Nat. Genet.">
        <title>Complete sequencing and characterization of 21,243 full-length human cDNAs.</title>
        <authorList>
            <person name="Ota T."/>
            <person name="Suzuki Y."/>
            <person name="Nishikawa T."/>
            <person name="Otsuki T."/>
            <person name="Sugiyama T."/>
            <person name="Irie R."/>
            <person name="Wakamatsu A."/>
            <person name="Hayashi K."/>
            <person name="Sato H."/>
            <person name="Nagai K."/>
            <person name="Kimura K."/>
            <person name="Makita H."/>
            <person name="Sekine M."/>
            <person name="Obayashi M."/>
            <person name="Nishi T."/>
            <person name="Shibahara T."/>
            <person name="Tanaka T."/>
            <person name="Ishii S."/>
            <person name="Yamamoto J."/>
            <person name="Saito K."/>
            <person name="Kawai Y."/>
            <person name="Isono Y."/>
            <person name="Nakamura Y."/>
            <person name="Nagahari K."/>
            <person name="Murakami K."/>
            <person name="Yasuda T."/>
            <person name="Iwayanagi T."/>
            <person name="Wagatsuma M."/>
            <person name="Shiratori A."/>
            <person name="Sudo H."/>
            <person name="Hosoiri T."/>
            <person name="Kaku Y."/>
            <person name="Kodaira H."/>
            <person name="Kondo H."/>
            <person name="Sugawara M."/>
            <person name="Takahashi M."/>
            <person name="Kanda K."/>
            <person name="Yokoi T."/>
            <person name="Furuya T."/>
            <person name="Kikkawa E."/>
            <person name="Omura Y."/>
            <person name="Abe K."/>
            <person name="Kamihara K."/>
            <person name="Katsuta N."/>
            <person name="Sato K."/>
            <person name="Tanikawa M."/>
            <person name="Yamazaki M."/>
            <person name="Ninomiya K."/>
            <person name="Ishibashi T."/>
            <person name="Yamashita H."/>
            <person name="Murakawa K."/>
            <person name="Fujimori K."/>
            <person name="Tanai H."/>
            <person name="Kimata M."/>
            <person name="Watanabe M."/>
            <person name="Hiraoka S."/>
            <person name="Chiba Y."/>
            <person name="Ishida S."/>
            <person name="Ono Y."/>
            <person name="Takiguchi S."/>
            <person name="Watanabe S."/>
            <person name="Yosida M."/>
            <person name="Hotuta T."/>
            <person name="Kusano J."/>
            <person name="Kanehori K."/>
            <person name="Takahashi-Fujii A."/>
            <person name="Hara H."/>
            <person name="Tanase T.-O."/>
            <person name="Nomura Y."/>
            <person name="Togiya S."/>
            <person name="Komai F."/>
            <person name="Hara R."/>
            <person name="Takeuchi K."/>
            <person name="Arita M."/>
            <person name="Imose N."/>
            <person name="Musashino K."/>
            <person name="Yuuki H."/>
            <person name="Oshima A."/>
            <person name="Sasaki N."/>
            <person name="Aotsuka S."/>
            <person name="Yoshikawa Y."/>
            <person name="Matsunawa H."/>
            <person name="Ichihara T."/>
            <person name="Shiohata N."/>
            <person name="Sano S."/>
            <person name="Moriya S."/>
            <person name="Momiyama H."/>
            <person name="Satoh N."/>
            <person name="Takami S."/>
            <person name="Terashima Y."/>
            <person name="Suzuki O."/>
            <person name="Nakagawa S."/>
            <person name="Senoh A."/>
            <person name="Mizoguchi H."/>
            <person name="Goto Y."/>
            <person name="Shimizu F."/>
            <person name="Wakebe H."/>
            <person name="Hishigaki H."/>
            <person name="Watanabe T."/>
            <person name="Sugiyama A."/>
            <person name="Takemoto M."/>
            <person name="Kawakami B."/>
            <person name="Yamazaki M."/>
            <person name="Watanabe K."/>
            <person name="Kumagai A."/>
            <person name="Itakura S."/>
            <person name="Fukuzumi Y."/>
            <person name="Fujimori Y."/>
            <person name="Komiyama M."/>
            <person name="Tashiro H."/>
            <person name="Tanigami A."/>
            <person name="Fujiwara T."/>
            <person name="Ono T."/>
            <person name="Yamada K."/>
            <person name="Fujii Y."/>
            <person name="Ozaki K."/>
            <person name="Hirao M."/>
            <person name="Ohmori Y."/>
            <person name="Kawabata A."/>
            <person name="Hikiji T."/>
            <person name="Kobatake N."/>
            <person name="Inagaki H."/>
            <person name="Ikema Y."/>
            <person name="Okamoto S."/>
            <person name="Okitani R."/>
            <person name="Kawakami T."/>
            <person name="Noguchi S."/>
            <person name="Itoh T."/>
            <person name="Shigeta K."/>
            <person name="Senba T."/>
            <person name="Matsumura K."/>
            <person name="Nakajima Y."/>
            <person name="Mizuno T."/>
            <person name="Morinaga M."/>
            <person name="Sasaki M."/>
            <person name="Togashi T."/>
            <person name="Oyama M."/>
            <person name="Hata H."/>
            <person name="Watanabe M."/>
            <person name="Komatsu T."/>
            <person name="Mizushima-Sugano J."/>
            <person name="Satoh T."/>
            <person name="Shirai Y."/>
            <person name="Takahashi Y."/>
            <person name="Nakagawa K."/>
            <person name="Okumura K."/>
            <person name="Nagase T."/>
            <person name="Nomura N."/>
            <person name="Kikuchi H."/>
            <person name="Masuho Y."/>
            <person name="Yamashita R."/>
            <person name="Nakai K."/>
            <person name="Yada T."/>
            <person name="Nakamura Y."/>
            <person name="Ohara O."/>
            <person name="Isogai T."/>
            <person name="Sugano S."/>
        </authorList>
    </citation>
    <scope>NUCLEOTIDE SEQUENCE [LARGE SCALE MRNA] (ISOFORM 2)</scope>
    <source>
        <tissue>Tongue</tissue>
    </source>
</reference>
<reference key="6">
    <citation type="submission" date="2005-09" db="EMBL/GenBank/DDBJ databases">
        <authorList>
            <person name="Mural R.J."/>
            <person name="Istrail S."/>
            <person name="Sutton G.G."/>
            <person name="Florea L."/>
            <person name="Halpern A.L."/>
            <person name="Mobarry C.M."/>
            <person name="Lippert R."/>
            <person name="Walenz B."/>
            <person name="Shatkay H."/>
            <person name="Dew I."/>
            <person name="Miller J.R."/>
            <person name="Flanigan M.J."/>
            <person name="Edwards N.J."/>
            <person name="Bolanos R."/>
            <person name="Fasulo D."/>
            <person name="Halldorsson B.V."/>
            <person name="Hannenhalli S."/>
            <person name="Turner R."/>
            <person name="Yooseph S."/>
            <person name="Lu F."/>
            <person name="Nusskern D.R."/>
            <person name="Shue B.C."/>
            <person name="Zheng X.H."/>
            <person name="Zhong F."/>
            <person name="Delcher A.L."/>
            <person name="Huson D.H."/>
            <person name="Kravitz S.A."/>
            <person name="Mouchard L."/>
            <person name="Reinert K."/>
            <person name="Remington K.A."/>
            <person name="Clark A.G."/>
            <person name="Waterman M.S."/>
            <person name="Eichler E.E."/>
            <person name="Adams M.D."/>
            <person name="Hunkapiller M.W."/>
            <person name="Myers E.W."/>
            <person name="Venter J.C."/>
        </authorList>
    </citation>
    <scope>NUCLEOTIDE SEQUENCE [LARGE SCALE GENOMIC DNA]</scope>
</reference>
<reference key="7">
    <citation type="journal article" date="1988" name="J. Clin. Invest.">
        <title>Amphipathic segment of the nicotinic receptor alpha subunit contains epitopes recognized by T lymphocytes in myasthenia gravis.</title>
        <authorList>
            <person name="Hohlfeld R."/>
            <person name="Toyka K.V."/>
            <person name="Miner L.L."/>
            <person name="Walgrave S.L."/>
            <person name="Conti-Tronconi B.M."/>
        </authorList>
    </citation>
    <scope>PROTEIN SEQUENCE OF 21-457 (ISOFORM 1)</scope>
</reference>
<reference key="8">
    <citation type="journal article" date="1993" name="Nucleic Acids Res.">
        <title>Differential expression of human nicotinic acetylcholine receptor alpha subunit variants in muscle and non-muscle tissues.</title>
        <authorList>
            <person name="Talib S."/>
            <person name="Okarma T.B."/>
            <person name="Lebkowski J.S."/>
        </authorList>
    </citation>
    <scope>NUCLEOTIDE SEQUENCE [GENOMIC DNA] OF 79-89</scope>
</reference>
<reference key="9">
    <citation type="journal article" date="1995" name="J. Physiol. (Lond.)">
        <title>Functional and non-functional isoforms of the human muscle acetylcholine receptor.</title>
        <authorList>
            <person name="Newland C.F."/>
            <person name="Beeson D."/>
            <person name="Vincent A."/>
            <person name="Newsom-Davis J."/>
        </authorList>
    </citation>
    <scope>FUNCTION (ISOFORMS 1 AND 2)</scope>
    <scope>SUBUNIT (ISOFORMS 1 AND 2)</scope>
    <scope>MISCELLANEOUS (ISOFORM 2)</scope>
    <scope>MUTAGENESIS OF GLU-261</scope>
</reference>
<reference key="10">
    <citation type="journal article" date="2004" name="Biochemistry">
        <title>Alpha-conotoxins ImI and ImII target distinct regions of the human alpha7 nicotinic acetylcholine receptor and distinguish human nicotinic receptor subtypes.</title>
        <authorList>
            <person name="Ellison M."/>
            <person name="Gao F."/>
            <person name="Wang H.L."/>
            <person name="Sine S.M."/>
            <person name="McIntosh J.M."/>
            <person name="Olivera B.M."/>
        </authorList>
    </citation>
    <scope>SUBUNIT</scope>
</reference>
<reference key="11">
    <citation type="journal article" date="2009" name="Sci. Signal.">
        <title>Quantitative phosphoproteomic analysis of T cell receptor signaling reveals system-wide modulation of protein-protein interactions.</title>
        <authorList>
            <person name="Mayya V."/>
            <person name="Lundgren D.H."/>
            <person name="Hwang S.-I."/>
            <person name="Rezaul K."/>
            <person name="Wu L."/>
            <person name="Eng J.K."/>
            <person name="Rodionov V."/>
            <person name="Han D.K."/>
        </authorList>
    </citation>
    <scope>IDENTIFICATION BY MASS SPECTROMETRY [LARGE SCALE ANALYSIS]</scope>
    <source>
        <tissue>Leukemic T-cell</tissue>
    </source>
</reference>
<reference key="12">
    <citation type="journal article" date="2016" name="Hum. Mutat.">
        <title>Mutations causing slow-channel myasthenia reveal that a valine ring in the channel pore of muscle AChR is optimized for stabilizing channel gating.</title>
        <authorList>
            <person name="Shen X.M."/>
            <person name="Okuno T."/>
            <person name="Milone M."/>
            <person name="Otsuka K."/>
            <person name="Takahashi K."/>
            <person name="Komaki H."/>
            <person name="Giles E."/>
            <person name="Ohno K."/>
            <person name="Engel A.G."/>
        </authorList>
    </citation>
    <scope>FUNCTION</scope>
    <scope>SUBCELLULAR LOCATION</scope>
    <scope>MUTAGENESIS OF VAL-275</scope>
</reference>
<reference evidence="20" key="13">
    <citation type="journal article" date="2017" name="Elife">
        <title>Structural insights into the molecular mechanisms of myasthenia gravis and their therapeutic implications.</title>
        <authorList>
            <person name="Noridomi K."/>
            <person name="Watanabe G."/>
            <person name="Hansen M.N."/>
            <person name="Han G.W."/>
            <person name="Chen L."/>
        </authorList>
    </citation>
    <scope>X-RAY CRYSTALLOGRAPHY (2.61 ANGSTROMS) OF 21-231</scope>
    <scope>DISULFIDE BONDS</scope>
</reference>
<reference key="14">
    <citation type="journal article" date="1995" name="Neuron">
        <title>Mutation of the acetylcholine receptor alpha subunit causes a slow-channel myasthenic syndrome by enhancing agonist binding affinity.</title>
        <authorList>
            <person name="Sine S.M."/>
            <person name="Ohno K."/>
            <person name="Bouzat C."/>
            <person name="Auerbach A."/>
            <person name="Milone M."/>
            <person name="Pruitt J.N. II"/>
            <person name="Engel A.G."/>
        </authorList>
    </citation>
    <scope>VARIANT CMS1A SER-173</scope>
</reference>
<reference key="15">
    <citation type="journal article" date="1996" name="Hum. Mol. Genet.">
        <title>New mutations in acetylcholine receptor subunit genes reveal heterogeneity in the slow-channel congenital myasthenic syndrome.</title>
        <authorList>
            <person name="Engel A.G."/>
            <person name="Ohno K."/>
            <person name="Milone M."/>
            <person name="Wang H.-L."/>
            <person name="Nakano S."/>
            <person name="Bouzat C."/>
            <person name="Pruitt J.N. II"/>
            <person name="Hutchinson D.O."/>
            <person name="Brengman J.M."/>
            <person name="Bren N."/>
            <person name="Sieb J.P."/>
            <person name="Sine S.M."/>
        </authorList>
    </citation>
    <scope>VARIANT CMS1A LYS-237</scope>
</reference>
<reference key="16">
    <citation type="journal article" date="1997" name="Hum. Mol. Genet.">
        <title>Mutations in different functional domains of the human muscle acetylcholine receptor alpha subunit in patients with the slow-channel congenital myasthenic syndrome.</title>
        <authorList>
            <person name="Croxen R."/>
            <person name="Newland C."/>
            <person name="Beeson D."/>
            <person name="Oosterhuis H."/>
            <person name="Chauplannaz G."/>
            <person name="Vincent A."/>
            <person name="Newsom-Davis J."/>
        </authorList>
    </citation>
    <scope>VARIANTS CMS1A SER-173; MET-176; ILE-274 AND ILE-289</scope>
</reference>
<reference key="17">
    <citation type="journal article" date="1997" name="J. Neurosci.">
        <title>Slow-channel myasthenic syndrome caused by enhanced activation, desensitization, and agonist binding affinity attributable to mutation in the M2 domain of the acetylcholine receptor alpha subunit.</title>
        <authorList>
            <person name="Milone M."/>
            <person name="Wang H.-L."/>
            <person name="Ohno K."/>
            <person name="Fukudome T."/>
            <person name="Pruitt J.N. II"/>
            <person name="Bren N."/>
            <person name="Sine S.M."/>
            <person name="Engel A.G."/>
        </authorList>
    </citation>
    <scope>VARIANT CMS1A PHE-269</scope>
    <scope>CHARACTERIZATION OF VARIANT CMS1A PHE-269</scope>
</reference>
<reference key="18">
    <citation type="journal article" date="1999" name="Nat. Neurosci.">
        <title>Acetylcholine receptor M3 domain: stereochemical and volume contributions to channel gating.</title>
        <authorList>
            <person name="Wang H.-L."/>
            <person name="Milone M."/>
            <person name="Ohno K."/>
            <person name="Shen X.-M."/>
            <person name="Tsujino A."/>
            <person name="Batocchi A.-P."/>
            <person name="Tonali P."/>
            <person name="Brengman J."/>
            <person name="Engel A.G."/>
            <person name="Sine S.M."/>
        </authorList>
    </citation>
    <scope>VARIANTS CMS1B VAL-253 AND ILE-305</scope>
    <scope>CHARACTERIZATION OF VARIANTS CMS1B VAL-253 AND ILE-305</scope>
</reference>
<reference key="19">
    <citation type="journal article" date="1999" name="Nat. Neurosci.">
        <authorList>
            <person name="Wang H.-L."/>
            <person name="Milone M."/>
            <person name="Ohno K."/>
            <person name="Shen X.-M."/>
            <person name="Tsujino A."/>
            <person name="Batocchi A.-P."/>
            <person name="Tonali P."/>
            <person name="Brengman J."/>
            <person name="Engel A.G."/>
            <person name="Sine S.M."/>
        </authorList>
    </citation>
    <scope>ERRATUM OF PUBMED:10195214</scope>
</reference>
<reference key="20">
    <citation type="journal article" date="2003" name="J. Clin. Invest.">
        <title>Mutation causing severe myasthenia reveals functional asymmetry of AChR signature cystine loops in agonist binding and gating.</title>
        <authorList>
            <person name="Shen X.-M."/>
            <person name="Ohno K."/>
            <person name="Tsujino A."/>
            <person name="Brengman J.M."/>
            <person name="Gingold M."/>
            <person name="Sine S.M."/>
            <person name="Engel A.G."/>
        </authorList>
    </citation>
    <scope>VARIANT CMS1B LEU-152</scope>
    <scope>CHARACTERIZATION OF VARIANT CMS1B LEU-152</scope>
</reference>
<reference key="21">
    <citation type="journal article" date="2004" name="Neurology">
        <title>Mutation in the AChR ion channel gate underlies a fast channel congenital myasthenic syndrome.</title>
        <authorList>
            <person name="Webster R."/>
            <person name="Brydson M."/>
            <person name="Croxen R."/>
            <person name="Newsom-Davis J."/>
            <person name="Vincent A."/>
            <person name="Beeson D."/>
        </authorList>
    </citation>
    <scope>VARIANT CMS1B LEU-276</scope>
    <scope>CHARACTERIZATION OF VARIANT CMS1B LEU-276</scope>
</reference>
<reference key="22">
    <citation type="journal article" date="2006" name="Ann. Neurol.">
        <title>Slow-channel mutation in acetylcholine receptor alphaM4 domain and its efficient knockdown.</title>
        <authorList>
            <person name="Shen X.-M."/>
            <person name="Deymeer F."/>
            <person name="Sine S.M."/>
            <person name="Engel A.G."/>
        </authorList>
    </citation>
    <scope>VARIANT CMS1A TRP-438</scope>
    <scope>CHARACTERIZATION OF VARIANT CMS1A TRP-438</scope>
</reference>
<reference key="23">
    <citation type="journal article" date="2008" name="Am. J. Hum. Genet.">
        <title>Acetylcholine receptor pathway mutations explain various fetal akinesia deformation sequence disorders.</title>
        <authorList>
            <person name="Michalk A."/>
            <person name="Stricker S."/>
            <person name="Becker J."/>
            <person name="Rupps R."/>
            <person name="Pantzar T."/>
            <person name="Miertus J."/>
            <person name="Botta G."/>
            <person name="Naretto V.G."/>
            <person name="Janetzki C."/>
            <person name="Yaqoob N."/>
            <person name="Ott C.-E."/>
            <person name="Seelow D."/>
            <person name="Wieczorek D."/>
            <person name="Fiebig B."/>
            <person name="Wirth B."/>
            <person name="Hoopmann M."/>
            <person name="Walther M."/>
            <person name="Koerber F."/>
            <person name="Blankenburg M."/>
            <person name="Mundlos S."/>
            <person name="Heller R."/>
            <person name="Hoffmann K."/>
        </authorList>
    </citation>
    <scope>VARIANT LMPS LEU-229</scope>
</reference>
<accession>P02708</accession>
<accession>B4DRV6</accession>
<accession>D3DPE8</accession>
<feature type="signal peptide" evidence="9">
    <location>
        <begin position="1"/>
        <end position="20"/>
    </location>
</feature>
<feature type="chain" id="PRO_0000000305" description="Acetylcholine receptor subunit alpha">
    <location>
        <begin position="21"/>
        <end position="457"/>
    </location>
</feature>
<feature type="topological domain" description="Extracellular" evidence="17">
    <location>
        <begin position="21"/>
        <end position="232"/>
    </location>
</feature>
<feature type="transmembrane region" description="Helical" evidence="2">
    <location>
        <begin position="233"/>
        <end position="253"/>
    </location>
</feature>
<feature type="topological domain" description="Cytoplasmic" evidence="17">
    <location>
        <begin position="254"/>
        <end position="264"/>
    </location>
</feature>
<feature type="transmembrane region" description="Helical" evidence="2">
    <location>
        <begin position="265"/>
        <end position="285"/>
    </location>
</feature>
<feature type="topological domain" description="Extracellular" evidence="17">
    <location>
        <begin position="286"/>
        <end position="296"/>
    </location>
</feature>
<feature type="transmembrane region" description="Helical" evidence="2">
    <location>
        <begin position="297"/>
        <end position="317"/>
    </location>
</feature>
<feature type="topological domain" description="Cytoplasmic" evidence="17">
    <location>
        <begin position="318"/>
        <end position="427"/>
    </location>
</feature>
<feature type="transmembrane region" description="Helical" evidence="2">
    <location>
        <begin position="428"/>
        <end position="448"/>
    </location>
</feature>
<feature type="topological domain" description="Extracellular" evidence="17">
    <location>
        <begin position="449"/>
        <end position="457"/>
    </location>
</feature>
<feature type="glycosylation site" description="N-linked (GlcNAc...) asparagine" evidence="2">
    <location>
        <position position="161"/>
    </location>
</feature>
<feature type="disulfide bond" evidence="20">
    <location>
        <begin position="148"/>
        <end position="162"/>
    </location>
</feature>
<feature type="disulfide bond" description="Associated with receptor activation" evidence="20">
    <location>
        <begin position="212"/>
        <end position="213"/>
    </location>
</feature>
<feature type="splice variant" id="VSP_061499" description="In isoform 2.">
    <original>Q</original>
    <variation>QGDMVDLPRPSCVTLGVPLFSHLQNE</variation>
    <location>
        <position position="78"/>
    </location>
</feature>
<feature type="sequence variant" id="VAR_038599" description="In CMS1B; mutant channel shows an approximately 30-fold decrease of ACh binding affinity for the second of 2 closed-state binding sites but only a 2-fold decrease in gating efficiency; dbSNP:rs137852807." evidence="4">
    <original>V</original>
    <variation>L</variation>
    <location>
        <position position="152"/>
    </location>
</feature>
<feature type="sequence variant" id="VAR_000282" description="In CMS1A; dbSNP:rs137852801." evidence="11 14">
    <original>G</original>
    <variation>S</variation>
    <location>
        <position position="173"/>
    </location>
</feature>
<feature type="sequence variant" id="VAR_000283" description="In CMS1A; dbSNP:rs137852799." evidence="14">
    <original>V</original>
    <variation>M</variation>
    <location>
        <position position="176"/>
    </location>
</feature>
<feature type="sequence variant" id="VAR_043904" description="In LMPS; dbSNP:rs137852809." evidence="8">
    <original>R</original>
    <variation>L</variation>
    <location>
        <position position="229"/>
    </location>
</feature>
<feature type="sequence variant" id="VAR_000284" description="In CMS1A; dbSNP:rs137852798." evidence="13">
    <original>N</original>
    <variation>K</variation>
    <location>
        <position position="237"/>
    </location>
</feature>
<feature type="sequence variant" id="VAR_021206" description="In CMS1B; markedly reduced protein expression; dbSNP:rs137852805." evidence="3">
    <original>F</original>
    <variation>V</variation>
    <location>
        <position position="253"/>
    </location>
</feature>
<feature type="sequence variant" id="VAR_021207" description="In CMS1A; causes increased channel opening in absence of ACh; prolonged opening in presence of ACh; increased affinity for ACh and enhanced desensitization; dbSNP:rs137852803." evidence="15">
    <original>V</original>
    <variation>F</variation>
    <location>
        <position position="269"/>
    </location>
</feature>
<feature type="sequence variant" id="VAR_000285" description="In CMS1A; dbSNP:rs137852800." evidence="14">
    <original>T</original>
    <variation>I</variation>
    <location>
        <position position="274"/>
    </location>
</feature>
<feature type="sequence variant" id="VAR_021208" description="In CMS1B; fewer and shorter ion channel activations with decreased channel opening rate and increased channel closing rate; dbSNP:rs137852806." evidence="5">
    <original>F</original>
    <variation>L</variation>
    <location>
        <position position="276"/>
    </location>
</feature>
<feature type="sequence variant" id="VAR_000286" description="In CMS1A; dbSNP:rs137852802." evidence="14">
    <original>S</original>
    <variation>I</variation>
    <location>
        <position position="289"/>
    </location>
</feature>
<feature type="sequence variant" id="VAR_021209" description="In CMS1B; abnormally slow channel opening and closing resulting in abnormally brief current; dbSNP:rs137852804." evidence="3">
    <original>V</original>
    <variation>I</variation>
    <location>
        <position position="305"/>
    </location>
</feature>
<feature type="sequence variant" id="VAR_038600" description="In dbSNP:rs6739001.">
    <original>D</original>
    <variation>V</variation>
    <location>
        <position position="358"/>
    </location>
</feature>
<feature type="sequence variant" id="VAR_038601" description="In CMS1A; increases the rate of channel opening and slows the rate of channel closing but has no effect on agonist binding; dbSNP:rs137852808." evidence="7">
    <original>C</original>
    <variation>W</variation>
    <location>
        <position position="438"/>
    </location>
</feature>
<feature type="mutagenesis site" description="Changed acetylcholine-gated cation-selective channel activity." evidence="12">
    <original>E</original>
    <variation>Q</variation>
    <location>
        <position position="261"/>
    </location>
</feature>
<feature type="mutagenesis site" description="Increased length of channel opening." evidence="10">
    <original>V</original>
    <variation>A</variation>
    <location>
        <position position="275"/>
    </location>
</feature>
<feature type="sequence conflict" description="In Ref. 4; AAD14247." evidence="17" ref="4">
    <original>P</original>
    <variation>F</variation>
    <location>
        <position position="390"/>
    </location>
</feature>
<feature type="helix" evidence="21">
    <location>
        <begin position="23"/>
        <end position="31"/>
    </location>
</feature>
<feature type="strand" evidence="22">
    <location>
        <begin position="37"/>
        <end position="39"/>
    </location>
</feature>
<feature type="strand" evidence="21">
    <location>
        <begin position="49"/>
        <end position="52"/>
    </location>
</feature>
<feature type="turn" evidence="22">
    <location>
        <begin position="65"/>
        <end position="68"/>
    </location>
</feature>
<feature type="strand" evidence="21">
    <location>
        <begin position="81"/>
        <end position="86"/>
    </location>
</feature>
<feature type="helix" evidence="21">
    <location>
        <begin position="89"/>
        <end position="92"/>
    </location>
</feature>
<feature type="strand" evidence="21">
    <location>
        <begin position="97"/>
        <end position="101"/>
    </location>
</feature>
<feature type="helix" evidence="22">
    <location>
        <begin position="102"/>
        <end position="104"/>
    </location>
</feature>
<feature type="strand" evidence="22">
    <location>
        <begin position="110"/>
        <end position="113"/>
    </location>
</feature>
<feature type="strand" evidence="22">
    <location>
        <begin position="115"/>
        <end position="120"/>
    </location>
</feature>
<feature type="strand" evidence="22">
    <location>
        <begin position="127"/>
        <end position="131"/>
    </location>
</feature>
<feature type="strand" evidence="22">
    <location>
        <begin position="134"/>
        <end position="138"/>
    </location>
</feature>
<feature type="strand" evidence="22">
    <location>
        <begin position="141"/>
        <end position="147"/>
    </location>
</feature>
<feature type="strand" evidence="22">
    <location>
        <begin position="159"/>
        <end position="170"/>
    </location>
</feature>
<feature type="turn" evidence="22">
    <location>
        <begin position="173"/>
        <end position="175"/>
    </location>
</feature>
<feature type="strand" evidence="22">
    <location>
        <begin position="176"/>
        <end position="184"/>
    </location>
</feature>
<feature type="strand" evidence="22">
    <location>
        <begin position="194"/>
        <end position="210"/>
    </location>
</feature>
<feature type="strand" evidence="22">
    <location>
        <begin position="218"/>
        <end position="229"/>
    </location>
</feature>
<sequence>MEPWPLLLLFSLCSAGLVLGSEHETRLVAKLFKDYSSVVRPVEDHRQVVEVTVGLQLIQLINVDEVNQIVTTNVRLKQQWVDYNLKWNPDDYGGVKKIHIPSEKIWRPDLVLYNNADGDFAIVKFTKVLLQYTGHITWTPPAIFKSYCEIIVTHFPFDEQNCSMKLGTWTYDGSVVAINPESDQPDLSNFMESGEWVIKESRGWKHSVTYSCCPDTPYLDITYHFVMQRLPLYFIVNVIIPCLLFSFLTGLVFYLPTDSGEKMTLSISVLLSLTVFLLVIVELIPSTSSAVPLIGKYMLFTMVFVIASIIITVIVINTHHRSPSTHVMPNWVRKVFIDTIPNIMFFSTMKRPSREKQDKKIFTEDIDISDISGKPGPPPMGFHSPLIKHPEVKSAIEGIKYIAETMKSDQESNNAAAEWKYVAMVMDHILLGVFMLVCIIGTLAVFAGRLIELNQQG</sequence>
<evidence type="ECO:0000250" key="1">
    <source>
        <dbReference type="UniProtKB" id="P02709"/>
    </source>
</evidence>
<evidence type="ECO:0000255" key="2"/>
<evidence type="ECO:0000269" key="3">
    <source>
    </source>
</evidence>
<evidence type="ECO:0000269" key="4">
    <source>
    </source>
</evidence>
<evidence type="ECO:0000269" key="5">
    <source>
    </source>
</evidence>
<evidence type="ECO:0000269" key="6">
    <source>
    </source>
</evidence>
<evidence type="ECO:0000269" key="7">
    <source>
    </source>
</evidence>
<evidence type="ECO:0000269" key="8">
    <source>
    </source>
</evidence>
<evidence type="ECO:0000269" key="9">
    <source>
    </source>
</evidence>
<evidence type="ECO:0000269" key="10">
    <source>
    </source>
</evidence>
<evidence type="ECO:0000269" key="11">
    <source>
    </source>
</evidence>
<evidence type="ECO:0000269" key="12">
    <source>
    </source>
</evidence>
<evidence type="ECO:0000269" key="13">
    <source>
    </source>
</evidence>
<evidence type="ECO:0000269" key="14">
    <source>
    </source>
</evidence>
<evidence type="ECO:0000269" key="15">
    <source>
    </source>
</evidence>
<evidence type="ECO:0000303" key="16">
    <source>
    </source>
</evidence>
<evidence type="ECO:0000305" key="17"/>
<evidence type="ECO:0000305" key="18">
    <source>
    </source>
</evidence>
<evidence type="ECO:0000312" key="19">
    <source>
        <dbReference type="HGNC" id="HGNC:1955"/>
    </source>
</evidence>
<evidence type="ECO:0007744" key="20">
    <source>
        <dbReference type="PDB" id="5HBT"/>
    </source>
</evidence>
<evidence type="ECO:0007829" key="21">
    <source>
        <dbReference type="PDB" id="4ZJS"/>
    </source>
</evidence>
<evidence type="ECO:0007829" key="22">
    <source>
        <dbReference type="PDB" id="5HBT"/>
    </source>
</evidence>
<gene>
    <name evidence="19" type="primary">CHRNA1</name>
    <name type="synonym">ACHRA</name>
    <name type="synonym">CHNRA</name>
</gene>